<organism>
    <name type="scientific">Mycolicibacterium smegmatis (strain ATCC 700084 / mc(2)155)</name>
    <name type="common">Mycobacterium smegmatis</name>
    <dbReference type="NCBI Taxonomy" id="246196"/>
    <lineage>
        <taxon>Bacteria</taxon>
        <taxon>Bacillati</taxon>
        <taxon>Actinomycetota</taxon>
        <taxon>Actinomycetes</taxon>
        <taxon>Mycobacteriales</taxon>
        <taxon>Mycobacteriaceae</taxon>
        <taxon>Mycolicibacterium</taxon>
    </lineage>
</organism>
<feature type="chain" id="PRO_0000461822" description="HTH-type transcriptional regulator AldR">
    <location>
        <begin position="1"/>
        <end position="171"/>
    </location>
</feature>
<feature type="domain" description="HTH asnC-type" evidence="2">
    <location>
        <begin position="24"/>
        <end position="85"/>
    </location>
</feature>
<feature type="DNA-binding region" description="H-T-H motif" evidence="2">
    <location>
        <begin position="43"/>
        <end position="62"/>
    </location>
</feature>
<feature type="region of interest" description="Disordered" evidence="3">
    <location>
        <begin position="1"/>
        <end position="21"/>
    </location>
</feature>
<feature type="compositionally biased region" description="Polar residues" evidence="3">
    <location>
        <begin position="1"/>
        <end position="14"/>
    </location>
</feature>
<reference evidence="8" key="1">
    <citation type="submission" date="2006-10" db="EMBL/GenBank/DDBJ databases">
        <authorList>
            <person name="Fleischmann R.D."/>
            <person name="Dodson R.J."/>
            <person name="Haft D.H."/>
            <person name="Merkel J.S."/>
            <person name="Nelson W.C."/>
            <person name="Fraser C.M."/>
        </authorList>
    </citation>
    <scope>NUCLEOTIDE SEQUENCE [LARGE SCALE GENOMIC DNA]</scope>
    <source>
        <strain>ATCC 700084 / mc(2)155</strain>
    </source>
</reference>
<reference evidence="9" key="2">
    <citation type="journal article" date="2007" name="Genome Biol.">
        <title>Interrupted coding sequences in Mycobacterium smegmatis: authentic mutations or sequencing errors?</title>
        <authorList>
            <person name="Deshayes C."/>
            <person name="Perrodou E."/>
            <person name="Gallien S."/>
            <person name="Euphrasie D."/>
            <person name="Schaeffer C."/>
            <person name="Van-Dorsselaer A."/>
            <person name="Poch O."/>
            <person name="Lecompte O."/>
            <person name="Reyrat J.-M."/>
        </authorList>
    </citation>
    <scope>NUCLEOTIDE SEQUENCE [LARGE SCALE GENOMIC DNA]</scope>
    <source>
        <strain>ATCC 700084 / mc(2)155</strain>
    </source>
</reference>
<reference evidence="9" key="3">
    <citation type="journal article" date="2009" name="Genome Res.">
        <title>Ortho-proteogenomics: multiple proteomes investigation through orthology and a new MS-based protocol.</title>
        <authorList>
            <person name="Gallien S."/>
            <person name="Perrodou E."/>
            <person name="Carapito C."/>
            <person name="Deshayes C."/>
            <person name="Reyrat J.-M."/>
            <person name="Van Dorsselaer A."/>
            <person name="Poch O."/>
            <person name="Schaeffer C."/>
            <person name="Lecompte O."/>
        </authorList>
    </citation>
    <scope>NUCLEOTIDE SEQUENCE [LARGE SCALE GENOMIC DNA]</scope>
    <source>
        <strain>ATCC 700084 / mc(2)155</strain>
    </source>
</reference>
<reference key="4">
    <citation type="journal article" date="2013" name="J. Bacteriol.">
        <title>Regulation of the ald gene encoding alanine dehydrogenase by AldR in Mycobacterium smegmatis.</title>
        <authorList>
            <person name="Jeong J.A."/>
            <person name="Baek E.Y."/>
            <person name="Kim S.W."/>
            <person name="Choi J.S."/>
            <person name="Oh J.I."/>
        </authorList>
    </citation>
    <scope>FUNCTION</scope>
    <scope>DNA-BINDING</scope>
    <scope>ACTIVITY REGULATION</scope>
    <scope>SUBUNIT</scope>
    <scope>DISRUPTION PHENOTYPE</scope>
    <source>
        <strain>ATCC 700084 / mc(2)155</strain>
    </source>
</reference>
<reference key="5">
    <citation type="journal article" date="2015" name="J. Bacteriol.">
        <title>Regulation Mechanism of the ald Gene Encoding Alanine Dehydrogenase in Mycobacterium smegmatis and Mycobacterium tuberculosis by the Lrp/AsnC Family Regulator AldR.</title>
        <authorList>
            <person name="Jeong J.A."/>
            <person name="Hyun J."/>
            <person name="Oh J.I."/>
        </authorList>
    </citation>
    <scope>FUNCTION</scope>
    <scope>DNA-BINDING</scope>
    <scope>ACTIVITY REGULATION</scope>
    <scope>SUBUNIT</scope>
    <scope>INDUCTION</scope>
</reference>
<evidence type="ECO:0000250" key="1">
    <source>
        <dbReference type="UniProtKB" id="O33321"/>
    </source>
</evidence>
<evidence type="ECO:0000255" key="2">
    <source>
        <dbReference type="PROSITE-ProRule" id="PRU00319"/>
    </source>
</evidence>
<evidence type="ECO:0000256" key="3">
    <source>
        <dbReference type="SAM" id="MobiDB-lite"/>
    </source>
</evidence>
<evidence type="ECO:0000269" key="4">
    <source>
    </source>
</evidence>
<evidence type="ECO:0000269" key="5">
    <source>
    </source>
</evidence>
<evidence type="ECO:0000303" key="6">
    <source>
    </source>
</evidence>
<evidence type="ECO:0000305" key="7"/>
<evidence type="ECO:0000312" key="8">
    <source>
        <dbReference type="EMBL" id="ABK70032.1"/>
    </source>
</evidence>
<evidence type="ECO:0000312" key="9">
    <source>
        <dbReference type="EMBL" id="AFP39065.1"/>
    </source>
</evidence>
<protein>
    <recommendedName>
        <fullName evidence="7">HTH-type transcriptional regulator AldR</fullName>
    </recommendedName>
    <alternativeName>
        <fullName evidence="6">Alanine dehydrogenase regulator</fullName>
    </alternativeName>
</protein>
<gene>
    <name evidence="6" type="primary">aldR</name>
    <name evidence="8" type="ordered locus">MSMEG_2660</name>
    <name evidence="9" type="ordered locus">MSMEI_2597</name>
</gene>
<keyword id="KW-0010">Activator</keyword>
<keyword id="KW-0238">DNA-binding</keyword>
<keyword id="KW-1185">Reference proteome</keyword>
<keyword id="KW-0678">Repressor</keyword>
<keyword id="KW-0804">Transcription</keyword>
<keyword id="KW-0805">Transcription regulation</keyword>
<dbReference type="EMBL" id="CP000480">
    <property type="protein sequence ID" value="ABK70032.1"/>
    <property type="molecule type" value="Genomic_DNA"/>
</dbReference>
<dbReference type="EMBL" id="CP001663">
    <property type="protein sequence ID" value="AFP39065.1"/>
    <property type="status" value="ALT_INIT"/>
    <property type="molecule type" value="Genomic_DNA"/>
</dbReference>
<dbReference type="RefSeq" id="WP_003894042.1">
    <property type="nucleotide sequence ID" value="NZ_SIJM01000064.1"/>
</dbReference>
<dbReference type="RefSeq" id="YP_886997.1">
    <property type="nucleotide sequence ID" value="NC_008596.1"/>
</dbReference>
<dbReference type="STRING" id="246196.MSMEG_2660"/>
<dbReference type="PaxDb" id="246196-MSMEI_2597"/>
<dbReference type="KEGG" id="msb:LJ00_13240"/>
<dbReference type="KEGG" id="msg:MSMEI_2597"/>
<dbReference type="KEGG" id="msm:MSMEG_2660"/>
<dbReference type="PATRIC" id="fig|246196.19.peg.2626"/>
<dbReference type="eggNOG" id="COG1522">
    <property type="taxonomic scope" value="Bacteria"/>
</dbReference>
<dbReference type="OrthoDB" id="4411089at2"/>
<dbReference type="Proteomes" id="UP000000757">
    <property type="component" value="Chromosome"/>
</dbReference>
<dbReference type="Proteomes" id="UP000006158">
    <property type="component" value="Chromosome"/>
</dbReference>
<dbReference type="GO" id="GO:0005829">
    <property type="term" value="C:cytosol"/>
    <property type="evidence" value="ECO:0007669"/>
    <property type="project" value="TreeGrafter"/>
</dbReference>
<dbReference type="GO" id="GO:0043565">
    <property type="term" value="F:sequence-specific DNA binding"/>
    <property type="evidence" value="ECO:0007669"/>
    <property type="project" value="InterPro"/>
</dbReference>
<dbReference type="GO" id="GO:0043200">
    <property type="term" value="P:response to amino acid"/>
    <property type="evidence" value="ECO:0007669"/>
    <property type="project" value="TreeGrafter"/>
</dbReference>
<dbReference type="CDD" id="cd00090">
    <property type="entry name" value="HTH_ARSR"/>
    <property type="match status" value="1"/>
</dbReference>
<dbReference type="Gene3D" id="3.30.70.920">
    <property type="match status" value="1"/>
</dbReference>
<dbReference type="Gene3D" id="1.10.10.10">
    <property type="entry name" value="Winged helix-like DNA-binding domain superfamily/Winged helix DNA-binding domain"/>
    <property type="match status" value="1"/>
</dbReference>
<dbReference type="InterPro" id="IPR011991">
    <property type="entry name" value="ArsR-like_HTH"/>
</dbReference>
<dbReference type="InterPro" id="IPR000485">
    <property type="entry name" value="AsnC-type_HTH_dom"/>
</dbReference>
<dbReference type="InterPro" id="IPR011008">
    <property type="entry name" value="Dimeric_a/b-barrel"/>
</dbReference>
<dbReference type="InterPro" id="IPR019888">
    <property type="entry name" value="Tscrpt_reg_AsnC-like"/>
</dbReference>
<dbReference type="InterPro" id="IPR019887">
    <property type="entry name" value="Tscrpt_reg_AsnC/Lrp_C"/>
</dbReference>
<dbReference type="InterPro" id="IPR036388">
    <property type="entry name" value="WH-like_DNA-bd_sf"/>
</dbReference>
<dbReference type="InterPro" id="IPR036390">
    <property type="entry name" value="WH_DNA-bd_sf"/>
</dbReference>
<dbReference type="PANTHER" id="PTHR30154">
    <property type="entry name" value="LEUCINE-RESPONSIVE REGULATORY PROTEIN"/>
    <property type="match status" value="1"/>
</dbReference>
<dbReference type="PANTHER" id="PTHR30154:SF54">
    <property type="entry name" value="POSSIBLE TRANSCRIPTIONAL REGULATORY PROTEIN (PROBABLY LRP_ASNC-FAMILY)"/>
    <property type="match status" value="1"/>
</dbReference>
<dbReference type="Pfam" id="PF01037">
    <property type="entry name" value="AsnC_trans_reg"/>
    <property type="match status" value="1"/>
</dbReference>
<dbReference type="Pfam" id="PF13412">
    <property type="entry name" value="HTH_24"/>
    <property type="match status" value="1"/>
</dbReference>
<dbReference type="PRINTS" id="PR00033">
    <property type="entry name" value="HTHASNC"/>
</dbReference>
<dbReference type="SMART" id="SM00344">
    <property type="entry name" value="HTH_ASNC"/>
    <property type="match status" value="1"/>
</dbReference>
<dbReference type="SUPFAM" id="SSF54909">
    <property type="entry name" value="Dimeric alpha+beta barrel"/>
    <property type="match status" value="1"/>
</dbReference>
<dbReference type="SUPFAM" id="SSF46785">
    <property type="entry name" value="Winged helix' DNA-binding domain"/>
    <property type="match status" value="1"/>
</dbReference>
<dbReference type="PROSITE" id="PS50956">
    <property type="entry name" value="HTH_ASNC_2"/>
    <property type="match status" value="1"/>
</dbReference>
<comment type="function">
    <text evidence="4 5">Transcriptional regulator that might play a role under hypoxic conditions (PubMed:23749971). Regulates the expression of ald, which encodes L-alanine dehydrogenase (PubMed:23749971). Serves as both an activator for ald expression in the presence of L-alanine and a repressor in the absence of L-alanine (PubMed:23749971). Acts by binding directly to the upstream region of the ald gene (PubMed:23749971). Four AldR-binding sites (O2, O1, O4 and O3) were identified upstream of the ald gene (PubMed:26195594). O2, O1 and O4 are required for the induction of ald expression by alanine, while O3 is directly involved in the repression of ald expression, by occluding the access of RNA polymerase to the ald promoter (PubMed:23749971, PubMed:26195594). In addition to O3, both O1 and O4 are also necessary for full repression of ald expression in the absence of alanine (PubMed:26195594).</text>
</comment>
<comment type="activity regulation">
    <text evidence="4 5">In the presence of alanine, AldR changes its quaternary structure from a homodimer to an octamer with an open-ring conformation (PubMed:26195594). The binding affinity of AldR for the ald control region is increased significantly by L-alanine (PubMed:23749971). In vitro, L-cysteine also increases the binding affinity of AldR for the target DNA (PubMed:23749971).</text>
</comment>
<comment type="subunit">
    <text evidence="4 5">Homodimer in the absence of L-alanine (PubMed:23749971). Homooctamer in the presence of L-alanine (PubMed:26195594). Homotetramers in the presence of L-cysteine (PubMed:23749971).</text>
</comment>
<comment type="induction">
    <text evidence="5">Negatively autoregulated.</text>
</comment>
<comment type="domain">
    <text evidence="1">Contains an N-terminal DNA-binding domain, followed by a rather long linker and a C-terminal effector-binding domain, which is also involved in oligomeric interactions.</text>
</comment>
<comment type="disruption phenotype">
    <text evidence="4">Deletion of the gene does not affect the growth rate under aerobic conditions (PubMed:23749971). The ald gene is constitutively expressed in the mutant regardless of the presence or absence of L-alanine (PubMed:23749971). Induction of ald expression by exogenous L-alanine is abolished (PubMed:23749971).</text>
</comment>
<comment type="sequence caution" evidence="7">
    <conflict type="erroneous initiation">
        <sequence resource="EMBL-CDS" id="AFP39065"/>
    </conflict>
    <text>Truncated N-terminus.</text>
</comment>
<accession>A0QVQ9</accession>
<accession>I7FC01</accession>
<proteinExistence type="evidence at protein level"/>
<sequence>MSEGSSITGVQTPGSPKDVRARDLDDIDRRILLALHDDARIPNSALAEMVGIAPSTCHGRVRRLQEIGVIRGFYTDIDPAAVGLGLQAMISVSLQSNARGKIRSFIAHIRTRPQVMDVYFLAGGDDFILHVAARDTEDLRKFVVENLNADSDVAGTQTSLIFEHLRGASPL</sequence>
<name>ALDR_MYCS2</name>